<keyword id="KW-0963">Cytoplasm</keyword>
<keyword id="KW-0342">GTP-binding</keyword>
<keyword id="KW-0436">Ligase</keyword>
<keyword id="KW-0460">Magnesium</keyword>
<keyword id="KW-0479">Metal-binding</keyword>
<keyword id="KW-0547">Nucleotide-binding</keyword>
<keyword id="KW-0658">Purine biosynthesis</keyword>
<sequence>MPGIAIIGAQWGDEGKGKVVDVLAREADYVIRYQGGANAGHTVVAEGKVFKLNLLPSGVIHPHAVNVLGDGMVIDPFRFQEEVEGLRKEGFDPKILVSERAHLVLPHHKHVESRHNFVGTTGRGIGPAYSDRARRVGIRAGDLLDEATLRERVRRLLAEKPNSTREAGWDTEEKALADLHRMREILSPYIADTGSLLREAWRKGKRLLFEGAQATLLDLNYGTYPYVTSSHPTVGGILVGTGLSHKAITKVYGVAKAYTTRVGEGPFPTELQGELAHHLREKGGEYGTTTGRPRRVGWLDLVALRYACEVNGFDGLVLTKLDVLSGLEKVKVAVEYLDGARPGEASPEAVRYLELPGWGDLSHVKRREDLPANLLRYLELVEEHTGVPVVLFSTSPRREDTFGAVSWV</sequence>
<gene>
    <name evidence="1" type="primary">purA</name>
    <name type="ordered locus">TT_C1764</name>
</gene>
<proteinExistence type="inferred from homology"/>
<dbReference type="EC" id="6.3.4.4" evidence="1"/>
<dbReference type="EMBL" id="AE017221">
    <property type="protein sequence ID" value="AAS82106.1"/>
    <property type="molecule type" value="Genomic_DNA"/>
</dbReference>
<dbReference type="RefSeq" id="WP_011174122.1">
    <property type="nucleotide sequence ID" value="NC_005835.1"/>
</dbReference>
<dbReference type="SMR" id="Q72GT4"/>
<dbReference type="GeneID" id="3168479"/>
<dbReference type="KEGG" id="tth:TT_C1764"/>
<dbReference type="eggNOG" id="COG0104">
    <property type="taxonomic scope" value="Bacteria"/>
</dbReference>
<dbReference type="HOGENOM" id="CLU_029848_0_0_0"/>
<dbReference type="OrthoDB" id="9807553at2"/>
<dbReference type="UniPathway" id="UPA00075">
    <property type="reaction ID" value="UER00335"/>
</dbReference>
<dbReference type="Proteomes" id="UP000000592">
    <property type="component" value="Chromosome"/>
</dbReference>
<dbReference type="GO" id="GO:0005737">
    <property type="term" value="C:cytoplasm"/>
    <property type="evidence" value="ECO:0007669"/>
    <property type="project" value="UniProtKB-SubCell"/>
</dbReference>
<dbReference type="GO" id="GO:0004019">
    <property type="term" value="F:adenylosuccinate synthase activity"/>
    <property type="evidence" value="ECO:0007669"/>
    <property type="project" value="UniProtKB-UniRule"/>
</dbReference>
<dbReference type="GO" id="GO:0005525">
    <property type="term" value="F:GTP binding"/>
    <property type="evidence" value="ECO:0007669"/>
    <property type="project" value="UniProtKB-UniRule"/>
</dbReference>
<dbReference type="GO" id="GO:0000287">
    <property type="term" value="F:magnesium ion binding"/>
    <property type="evidence" value="ECO:0007669"/>
    <property type="project" value="UniProtKB-UniRule"/>
</dbReference>
<dbReference type="GO" id="GO:0044208">
    <property type="term" value="P:'de novo' AMP biosynthetic process"/>
    <property type="evidence" value="ECO:0007669"/>
    <property type="project" value="UniProtKB-UniRule"/>
</dbReference>
<dbReference type="GO" id="GO:0046040">
    <property type="term" value="P:IMP metabolic process"/>
    <property type="evidence" value="ECO:0007669"/>
    <property type="project" value="TreeGrafter"/>
</dbReference>
<dbReference type="CDD" id="cd03108">
    <property type="entry name" value="AdSS"/>
    <property type="match status" value="1"/>
</dbReference>
<dbReference type="FunFam" id="3.90.170.10:FF:000001">
    <property type="entry name" value="Adenylosuccinate synthetase"/>
    <property type="match status" value="1"/>
</dbReference>
<dbReference type="Gene3D" id="3.40.440.10">
    <property type="entry name" value="Adenylosuccinate Synthetase, subunit A, domain 1"/>
    <property type="match status" value="1"/>
</dbReference>
<dbReference type="Gene3D" id="1.10.300.10">
    <property type="entry name" value="Adenylosuccinate Synthetase, subunit A, domain 2"/>
    <property type="match status" value="1"/>
</dbReference>
<dbReference type="Gene3D" id="3.90.170.10">
    <property type="entry name" value="Adenylosuccinate Synthetase, subunit A, domain 3"/>
    <property type="match status" value="1"/>
</dbReference>
<dbReference type="HAMAP" id="MF_00011">
    <property type="entry name" value="Adenylosucc_synth"/>
    <property type="match status" value="1"/>
</dbReference>
<dbReference type="InterPro" id="IPR018220">
    <property type="entry name" value="Adenylosuccin_syn_GTP-bd"/>
</dbReference>
<dbReference type="InterPro" id="IPR042109">
    <property type="entry name" value="Adenylosuccinate_synth_dom1"/>
</dbReference>
<dbReference type="InterPro" id="IPR042110">
    <property type="entry name" value="Adenylosuccinate_synth_dom2"/>
</dbReference>
<dbReference type="InterPro" id="IPR042111">
    <property type="entry name" value="Adenylosuccinate_synth_dom3"/>
</dbReference>
<dbReference type="InterPro" id="IPR001114">
    <property type="entry name" value="Adenylosuccinate_synthetase"/>
</dbReference>
<dbReference type="InterPro" id="IPR027417">
    <property type="entry name" value="P-loop_NTPase"/>
</dbReference>
<dbReference type="NCBIfam" id="NF002223">
    <property type="entry name" value="PRK01117.1"/>
    <property type="match status" value="1"/>
</dbReference>
<dbReference type="NCBIfam" id="TIGR00184">
    <property type="entry name" value="purA"/>
    <property type="match status" value="1"/>
</dbReference>
<dbReference type="PANTHER" id="PTHR11846">
    <property type="entry name" value="ADENYLOSUCCINATE SYNTHETASE"/>
    <property type="match status" value="1"/>
</dbReference>
<dbReference type="PANTHER" id="PTHR11846:SF0">
    <property type="entry name" value="ADENYLOSUCCINATE SYNTHETASE"/>
    <property type="match status" value="1"/>
</dbReference>
<dbReference type="Pfam" id="PF00709">
    <property type="entry name" value="Adenylsucc_synt"/>
    <property type="match status" value="1"/>
</dbReference>
<dbReference type="SMART" id="SM00788">
    <property type="entry name" value="Adenylsucc_synt"/>
    <property type="match status" value="1"/>
</dbReference>
<dbReference type="SUPFAM" id="SSF52540">
    <property type="entry name" value="P-loop containing nucleoside triphosphate hydrolases"/>
    <property type="match status" value="1"/>
</dbReference>
<dbReference type="PROSITE" id="PS01266">
    <property type="entry name" value="ADENYLOSUCCIN_SYN_1"/>
    <property type="match status" value="1"/>
</dbReference>
<reference key="1">
    <citation type="journal article" date="2004" name="Nat. Biotechnol.">
        <title>The genome sequence of the extreme thermophile Thermus thermophilus.</title>
        <authorList>
            <person name="Henne A."/>
            <person name="Brueggemann H."/>
            <person name="Raasch C."/>
            <person name="Wiezer A."/>
            <person name="Hartsch T."/>
            <person name="Liesegang H."/>
            <person name="Johann A."/>
            <person name="Lienard T."/>
            <person name="Gohl O."/>
            <person name="Martinez-Arias R."/>
            <person name="Jacobi C."/>
            <person name="Starkuviene V."/>
            <person name="Schlenczeck S."/>
            <person name="Dencker S."/>
            <person name="Huber R."/>
            <person name="Klenk H.-P."/>
            <person name="Kramer W."/>
            <person name="Merkl R."/>
            <person name="Gottschalk G."/>
            <person name="Fritz H.-J."/>
        </authorList>
    </citation>
    <scope>NUCLEOTIDE SEQUENCE [LARGE SCALE GENOMIC DNA]</scope>
    <source>
        <strain>ATCC BAA-163 / DSM 7039 / HB27</strain>
    </source>
</reference>
<protein>
    <recommendedName>
        <fullName evidence="1">Adenylosuccinate synthetase</fullName>
        <shortName evidence="1">AMPSase</shortName>
        <shortName evidence="1">AdSS</shortName>
        <ecNumber evidence="1">6.3.4.4</ecNumber>
    </recommendedName>
    <alternativeName>
        <fullName evidence="1">IMP--aspartate ligase</fullName>
    </alternativeName>
</protein>
<evidence type="ECO:0000255" key="1">
    <source>
        <dbReference type="HAMAP-Rule" id="MF_00011"/>
    </source>
</evidence>
<organism>
    <name type="scientific">Thermus thermophilus (strain ATCC BAA-163 / DSM 7039 / HB27)</name>
    <dbReference type="NCBI Taxonomy" id="262724"/>
    <lineage>
        <taxon>Bacteria</taxon>
        <taxon>Thermotogati</taxon>
        <taxon>Deinococcota</taxon>
        <taxon>Deinococci</taxon>
        <taxon>Thermales</taxon>
        <taxon>Thermaceae</taxon>
        <taxon>Thermus</taxon>
    </lineage>
</organism>
<accession>Q72GT4</accession>
<feature type="chain" id="PRO_0000224331" description="Adenylosuccinate synthetase">
    <location>
        <begin position="1"/>
        <end position="408"/>
    </location>
</feature>
<feature type="active site" description="Proton acceptor" evidence="1">
    <location>
        <position position="13"/>
    </location>
</feature>
<feature type="active site" description="Proton donor" evidence="1">
    <location>
        <position position="41"/>
    </location>
</feature>
<feature type="binding site" evidence="1">
    <location>
        <begin position="12"/>
        <end position="18"/>
    </location>
    <ligand>
        <name>GTP</name>
        <dbReference type="ChEBI" id="CHEBI:37565"/>
    </ligand>
</feature>
<feature type="binding site" description="in other chain" evidence="1">
    <location>
        <begin position="13"/>
        <end position="16"/>
    </location>
    <ligand>
        <name>IMP</name>
        <dbReference type="ChEBI" id="CHEBI:58053"/>
        <note>ligand shared between dimeric partners</note>
    </ligand>
</feature>
<feature type="binding site" evidence="1">
    <location>
        <position position="13"/>
    </location>
    <ligand>
        <name>Mg(2+)</name>
        <dbReference type="ChEBI" id="CHEBI:18420"/>
    </ligand>
</feature>
<feature type="binding site" description="in other chain" evidence="1">
    <location>
        <begin position="38"/>
        <end position="41"/>
    </location>
    <ligand>
        <name>IMP</name>
        <dbReference type="ChEBI" id="CHEBI:58053"/>
        <note>ligand shared between dimeric partners</note>
    </ligand>
</feature>
<feature type="binding site" evidence="1">
    <location>
        <begin position="40"/>
        <end position="42"/>
    </location>
    <ligand>
        <name>GTP</name>
        <dbReference type="ChEBI" id="CHEBI:37565"/>
    </ligand>
</feature>
<feature type="binding site" evidence="1">
    <location>
        <position position="40"/>
    </location>
    <ligand>
        <name>Mg(2+)</name>
        <dbReference type="ChEBI" id="CHEBI:18420"/>
    </ligand>
</feature>
<feature type="binding site" description="in other chain" evidence="1">
    <location>
        <position position="121"/>
    </location>
    <ligand>
        <name>IMP</name>
        <dbReference type="ChEBI" id="CHEBI:58053"/>
        <note>ligand shared between dimeric partners</note>
    </ligand>
</feature>
<feature type="binding site" evidence="1">
    <location>
        <position position="135"/>
    </location>
    <ligand>
        <name>IMP</name>
        <dbReference type="ChEBI" id="CHEBI:58053"/>
        <note>ligand shared between dimeric partners</note>
    </ligand>
</feature>
<feature type="binding site" description="in other chain" evidence="1">
    <location>
        <position position="213"/>
    </location>
    <ligand>
        <name>IMP</name>
        <dbReference type="ChEBI" id="CHEBI:58053"/>
        <note>ligand shared between dimeric partners</note>
    </ligand>
</feature>
<feature type="binding site" description="in other chain" evidence="1">
    <location>
        <position position="228"/>
    </location>
    <ligand>
        <name>IMP</name>
        <dbReference type="ChEBI" id="CHEBI:58053"/>
        <note>ligand shared between dimeric partners</note>
    </ligand>
</feature>
<feature type="binding site" evidence="1">
    <location>
        <begin position="288"/>
        <end position="294"/>
    </location>
    <ligand>
        <name>substrate</name>
    </ligand>
</feature>
<feature type="binding site" description="in other chain" evidence="1">
    <location>
        <position position="292"/>
    </location>
    <ligand>
        <name>IMP</name>
        <dbReference type="ChEBI" id="CHEBI:58053"/>
        <note>ligand shared between dimeric partners</note>
    </ligand>
</feature>
<feature type="binding site" evidence="1">
    <location>
        <position position="294"/>
    </location>
    <ligand>
        <name>GTP</name>
        <dbReference type="ChEBI" id="CHEBI:37565"/>
    </ligand>
</feature>
<feature type="binding site" evidence="1">
    <location>
        <begin position="320"/>
        <end position="322"/>
    </location>
    <ligand>
        <name>GTP</name>
        <dbReference type="ChEBI" id="CHEBI:37565"/>
    </ligand>
</feature>
<feature type="binding site" evidence="1">
    <location>
        <begin position="393"/>
        <end position="395"/>
    </location>
    <ligand>
        <name>GTP</name>
        <dbReference type="ChEBI" id="CHEBI:37565"/>
    </ligand>
</feature>
<name>PURA_THET2</name>
<comment type="function">
    <text evidence="1">Plays an important role in the de novo pathway of purine nucleotide biosynthesis. Catalyzes the first committed step in the biosynthesis of AMP from IMP.</text>
</comment>
<comment type="catalytic activity">
    <reaction evidence="1">
        <text>IMP + L-aspartate + GTP = N(6)-(1,2-dicarboxyethyl)-AMP + GDP + phosphate + 2 H(+)</text>
        <dbReference type="Rhea" id="RHEA:15753"/>
        <dbReference type="ChEBI" id="CHEBI:15378"/>
        <dbReference type="ChEBI" id="CHEBI:29991"/>
        <dbReference type="ChEBI" id="CHEBI:37565"/>
        <dbReference type="ChEBI" id="CHEBI:43474"/>
        <dbReference type="ChEBI" id="CHEBI:57567"/>
        <dbReference type="ChEBI" id="CHEBI:58053"/>
        <dbReference type="ChEBI" id="CHEBI:58189"/>
        <dbReference type="EC" id="6.3.4.4"/>
    </reaction>
</comment>
<comment type="cofactor">
    <cofactor evidence="1">
        <name>Mg(2+)</name>
        <dbReference type="ChEBI" id="CHEBI:18420"/>
    </cofactor>
    <text evidence="1">Binds 1 Mg(2+) ion per subunit.</text>
</comment>
<comment type="pathway">
    <text evidence="1">Purine metabolism; AMP biosynthesis via de novo pathway; AMP from IMP: step 1/2.</text>
</comment>
<comment type="subunit">
    <text evidence="1">Homodimer.</text>
</comment>
<comment type="subcellular location">
    <subcellularLocation>
        <location evidence="1">Cytoplasm</location>
    </subcellularLocation>
</comment>
<comment type="similarity">
    <text evidence="1">Belongs to the adenylosuccinate synthetase family.</text>
</comment>